<dbReference type="EMBL" id="X17137">
    <property type="protein sequence ID" value="CAA35008.1"/>
    <property type="molecule type" value="Genomic_DNA"/>
</dbReference>
<dbReference type="GO" id="GO:0000786">
    <property type="term" value="C:nucleosome"/>
    <property type="evidence" value="ECO:0007669"/>
    <property type="project" value="UniProtKB-KW"/>
</dbReference>
<dbReference type="GO" id="GO:0005634">
    <property type="term" value="C:nucleus"/>
    <property type="evidence" value="ECO:0007669"/>
    <property type="project" value="UniProtKB-SubCell"/>
</dbReference>
<dbReference type="GO" id="GO:0003677">
    <property type="term" value="F:DNA binding"/>
    <property type="evidence" value="ECO:0007669"/>
    <property type="project" value="UniProtKB-KW"/>
</dbReference>
<dbReference type="GO" id="GO:0046982">
    <property type="term" value="F:protein heterodimerization activity"/>
    <property type="evidence" value="ECO:0007669"/>
    <property type="project" value="InterPro"/>
</dbReference>
<dbReference type="GO" id="GO:0030527">
    <property type="term" value="F:structural constituent of chromatin"/>
    <property type="evidence" value="ECO:0007669"/>
    <property type="project" value="InterPro"/>
</dbReference>
<dbReference type="Gene3D" id="1.10.20.10">
    <property type="entry name" value="Histone, subunit A"/>
    <property type="match status" value="1"/>
</dbReference>
<dbReference type="InterPro" id="IPR009072">
    <property type="entry name" value="Histone-fold"/>
</dbReference>
<dbReference type="InterPro" id="IPR000164">
    <property type="entry name" value="Histone_H3/CENP-A"/>
</dbReference>
<dbReference type="PANTHER" id="PTHR11426">
    <property type="entry name" value="HISTONE H3"/>
    <property type="match status" value="1"/>
</dbReference>
<dbReference type="PRINTS" id="PR00622">
    <property type="entry name" value="HISTONEH3"/>
</dbReference>
<dbReference type="SUPFAM" id="SSF47113">
    <property type="entry name" value="Histone-fold"/>
    <property type="match status" value="1"/>
</dbReference>
<dbReference type="PROSITE" id="PS00322">
    <property type="entry name" value="HISTONE_H3_1"/>
    <property type="match status" value="1"/>
</dbReference>
<name>H32_TETNA</name>
<keyword id="KW-0158">Chromosome</keyword>
<keyword id="KW-0238">DNA-binding</keyword>
<keyword id="KW-0544">Nucleosome core</keyword>
<keyword id="KW-0539">Nucleus</keyword>
<reference key="1">
    <citation type="journal article" date="1990" name="Nucleic Acids Res.">
        <title>Characterization of the promoter region of Tetrahymena genes.</title>
        <authorList>
            <person name="Brunk C.F."/>
            <person name="Sadler L.A."/>
        </authorList>
    </citation>
    <scope>NUCLEOTIDE SEQUENCE [GENOMIC DNA]</scope>
</reference>
<reference key="2">
    <citation type="journal article" date="1990" name="J. Mol. Evol.">
        <title>Phylogenetic relationships among Tetrahymena species determined using the polymerase chain reaction.</title>
        <authorList>
            <person name="Brunk C.F."/>
            <person name="Kahn R.W."/>
            <person name="Sadler L.A."/>
        </authorList>
    </citation>
    <scope>NUCLEOTIDE SEQUENCE [GENOMIC DNA]</scope>
</reference>
<accession>P69120</accession>
<accession>P17705</accession>
<protein>
    <recommendedName>
        <fullName>Histone H3.2</fullName>
    </recommendedName>
</protein>
<sequence>MARTKQTARKSTGAKAPRKQLASKAARKSAPATGGIKKPHR</sequence>
<evidence type="ECO:0000250" key="1"/>
<evidence type="ECO:0000256" key="2">
    <source>
        <dbReference type="SAM" id="MobiDB-lite"/>
    </source>
</evidence>
<evidence type="ECO:0000305" key="3"/>
<proteinExistence type="inferred from homology"/>
<organism>
    <name type="scientific">Tetrahymena nanneyi</name>
    <dbReference type="NCBI Taxonomy" id="5903"/>
    <lineage>
        <taxon>Eukaryota</taxon>
        <taxon>Sar</taxon>
        <taxon>Alveolata</taxon>
        <taxon>Ciliophora</taxon>
        <taxon>Intramacronucleata</taxon>
        <taxon>Oligohymenophorea</taxon>
        <taxon>Hymenostomatida</taxon>
        <taxon>Tetrahymenina</taxon>
        <taxon>Tetrahymenidae</taxon>
        <taxon>Tetrahymena</taxon>
    </lineage>
</organism>
<feature type="initiator methionine" description="Removed" evidence="1">
    <location>
        <position position="1"/>
    </location>
</feature>
<feature type="chain" id="PRO_0000221342" description="Histone H3.2">
    <location>
        <begin position="2"/>
        <end position="41" status="greater than"/>
    </location>
</feature>
<feature type="region of interest" description="Disordered" evidence="2">
    <location>
        <begin position="1"/>
        <end position="41"/>
    </location>
</feature>
<feature type="non-terminal residue">
    <location>
        <position position="41"/>
    </location>
</feature>
<comment type="function">
    <text>Core component of nucleosome. Nucleosomes wrap and compact DNA into chromatin, limiting DNA accessibility to the cellular machineries which require DNA as a template. Histones thereby play a central role in transcription regulation, DNA repair, DNA replication and chromosomal stability. DNA accessibility is regulated via a complex set of post-translational modifications of histones, also called histone code, and nucleosome remodeling.</text>
</comment>
<comment type="subunit">
    <text>The nucleosome is a histone octamer containing two molecules each of H2A, H2B, H3 and H4 assembled in one H3-H4 heterotetramer and two H2A-H2B heterodimers. The octamer wraps approximately 147 bp of DNA.</text>
</comment>
<comment type="subcellular location">
    <subcellularLocation>
        <location evidence="1">Nucleus</location>
    </subcellularLocation>
    <subcellularLocation>
        <location evidence="1">Chromosome</location>
    </subcellularLocation>
</comment>
<comment type="similarity">
    <text evidence="3">Belongs to the histone H3 family.</text>
</comment>